<name>PUR5_CUPPJ</name>
<proteinExistence type="inferred from homology"/>
<sequence>MSASSTAGQAGLSYRDAGVDIDAGDALVDRIKPFAKRTMREGVMAGIGGFGALFELSKKYQEPVLVSGTDGVGTKLKLAFQLNRHDTVGQDLVAMSVNDILVQGAEPLFFLDYFACGKLDVDTAATVIQGIARGCELAGCALIGGETAEMPTMYPDGEYDLAGFAVGAVEKKKIIDGTTITPGDVVLGLASSGAHSNGYSLVRKIIEVAKPDLDADFHGQRLQDAIMAPTRIYVKPLLSLIETLPVKGMAHITGGGLTENVPRVLPQNTTAVLQRDAWALPPLFQWLQSQGRVADDEMHRVFNCGIGMVVIVAKEDAERAIRHLQAAGEAVWEIGEIRERAEGQAQTVVV</sequence>
<keyword id="KW-0067">ATP-binding</keyword>
<keyword id="KW-0963">Cytoplasm</keyword>
<keyword id="KW-0436">Ligase</keyword>
<keyword id="KW-0547">Nucleotide-binding</keyword>
<keyword id="KW-0658">Purine biosynthesis</keyword>
<organism>
    <name type="scientific">Cupriavidus pinatubonensis (strain JMP 134 / LMG 1197)</name>
    <name type="common">Cupriavidus necator (strain JMP 134)</name>
    <dbReference type="NCBI Taxonomy" id="264198"/>
    <lineage>
        <taxon>Bacteria</taxon>
        <taxon>Pseudomonadati</taxon>
        <taxon>Pseudomonadota</taxon>
        <taxon>Betaproteobacteria</taxon>
        <taxon>Burkholderiales</taxon>
        <taxon>Burkholderiaceae</taxon>
        <taxon>Cupriavidus</taxon>
    </lineage>
</organism>
<feature type="chain" id="PRO_0000258389" description="Phosphoribosylformylglycinamidine cyclo-ligase">
    <location>
        <begin position="1"/>
        <end position="350"/>
    </location>
</feature>
<comment type="catalytic activity">
    <reaction evidence="1">
        <text>2-formamido-N(1)-(5-O-phospho-beta-D-ribosyl)acetamidine + ATP = 5-amino-1-(5-phospho-beta-D-ribosyl)imidazole + ADP + phosphate + H(+)</text>
        <dbReference type="Rhea" id="RHEA:23032"/>
        <dbReference type="ChEBI" id="CHEBI:15378"/>
        <dbReference type="ChEBI" id="CHEBI:30616"/>
        <dbReference type="ChEBI" id="CHEBI:43474"/>
        <dbReference type="ChEBI" id="CHEBI:137981"/>
        <dbReference type="ChEBI" id="CHEBI:147287"/>
        <dbReference type="ChEBI" id="CHEBI:456216"/>
        <dbReference type="EC" id="6.3.3.1"/>
    </reaction>
</comment>
<comment type="pathway">
    <text evidence="1">Purine metabolism; IMP biosynthesis via de novo pathway; 5-amino-1-(5-phospho-D-ribosyl)imidazole from N(2)-formyl-N(1)-(5-phospho-D-ribosyl)glycinamide: step 2/2.</text>
</comment>
<comment type="subcellular location">
    <subcellularLocation>
        <location evidence="1">Cytoplasm</location>
    </subcellularLocation>
</comment>
<comment type="similarity">
    <text evidence="1">Belongs to the AIR synthase family.</text>
</comment>
<gene>
    <name evidence="1" type="primary">purM</name>
    <name type="ordered locus">Reut_A2773</name>
</gene>
<accession>Q46XJ9</accession>
<evidence type="ECO:0000255" key="1">
    <source>
        <dbReference type="HAMAP-Rule" id="MF_00741"/>
    </source>
</evidence>
<protein>
    <recommendedName>
        <fullName evidence="1">Phosphoribosylformylglycinamidine cyclo-ligase</fullName>
        <ecNumber evidence="1">6.3.3.1</ecNumber>
    </recommendedName>
    <alternativeName>
        <fullName evidence="1">AIR synthase</fullName>
    </alternativeName>
    <alternativeName>
        <fullName evidence="1">AIRS</fullName>
    </alternativeName>
    <alternativeName>
        <fullName evidence="1">Phosphoribosyl-aminoimidazole synthetase</fullName>
    </alternativeName>
</protein>
<reference key="1">
    <citation type="journal article" date="2010" name="PLoS ONE">
        <title>The complete multipartite genome sequence of Cupriavidus necator JMP134, a versatile pollutant degrader.</title>
        <authorList>
            <person name="Lykidis A."/>
            <person name="Perez-Pantoja D."/>
            <person name="Ledger T."/>
            <person name="Mavromatis K."/>
            <person name="Anderson I.J."/>
            <person name="Ivanova N.N."/>
            <person name="Hooper S.D."/>
            <person name="Lapidus A."/>
            <person name="Lucas S."/>
            <person name="Gonzalez B."/>
            <person name="Kyrpides N.C."/>
        </authorList>
    </citation>
    <scope>NUCLEOTIDE SEQUENCE [LARGE SCALE GENOMIC DNA]</scope>
    <source>
        <strain>JMP134 / LMG 1197</strain>
    </source>
</reference>
<dbReference type="EC" id="6.3.3.1" evidence="1"/>
<dbReference type="EMBL" id="CP000090">
    <property type="protein sequence ID" value="AAZ62134.1"/>
    <property type="molecule type" value="Genomic_DNA"/>
</dbReference>
<dbReference type="SMR" id="Q46XJ9"/>
<dbReference type="STRING" id="264198.Reut_A2773"/>
<dbReference type="KEGG" id="reu:Reut_A2773"/>
<dbReference type="eggNOG" id="COG0150">
    <property type="taxonomic scope" value="Bacteria"/>
</dbReference>
<dbReference type="HOGENOM" id="CLU_047116_0_0_4"/>
<dbReference type="OrthoDB" id="9777881at2"/>
<dbReference type="UniPathway" id="UPA00074">
    <property type="reaction ID" value="UER00129"/>
</dbReference>
<dbReference type="GO" id="GO:0005829">
    <property type="term" value="C:cytosol"/>
    <property type="evidence" value="ECO:0007669"/>
    <property type="project" value="TreeGrafter"/>
</dbReference>
<dbReference type="GO" id="GO:0005524">
    <property type="term" value="F:ATP binding"/>
    <property type="evidence" value="ECO:0007669"/>
    <property type="project" value="UniProtKB-KW"/>
</dbReference>
<dbReference type="GO" id="GO:0004637">
    <property type="term" value="F:phosphoribosylamine-glycine ligase activity"/>
    <property type="evidence" value="ECO:0007669"/>
    <property type="project" value="TreeGrafter"/>
</dbReference>
<dbReference type="GO" id="GO:0004641">
    <property type="term" value="F:phosphoribosylformylglycinamidine cyclo-ligase activity"/>
    <property type="evidence" value="ECO:0007669"/>
    <property type="project" value="UniProtKB-UniRule"/>
</dbReference>
<dbReference type="GO" id="GO:0006189">
    <property type="term" value="P:'de novo' IMP biosynthetic process"/>
    <property type="evidence" value="ECO:0007669"/>
    <property type="project" value="UniProtKB-UniRule"/>
</dbReference>
<dbReference type="GO" id="GO:0046084">
    <property type="term" value="P:adenine biosynthetic process"/>
    <property type="evidence" value="ECO:0007669"/>
    <property type="project" value="TreeGrafter"/>
</dbReference>
<dbReference type="CDD" id="cd02196">
    <property type="entry name" value="PurM"/>
    <property type="match status" value="1"/>
</dbReference>
<dbReference type="FunFam" id="3.30.1330.10:FF:000001">
    <property type="entry name" value="Phosphoribosylformylglycinamidine cyclo-ligase"/>
    <property type="match status" value="1"/>
</dbReference>
<dbReference type="FunFam" id="3.90.650.10:FF:000001">
    <property type="entry name" value="Phosphoribosylformylglycinamidine cyclo-ligase"/>
    <property type="match status" value="1"/>
</dbReference>
<dbReference type="Gene3D" id="3.90.650.10">
    <property type="entry name" value="PurM-like C-terminal domain"/>
    <property type="match status" value="1"/>
</dbReference>
<dbReference type="Gene3D" id="3.30.1330.10">
    <property type="entry name" value="PurM-like, N-terminal domain"/>
    <property type="match status" value="1"/>
</dbReference>
<dbReference type="HAMAP" id="MF_00741">
    <property type="entry name" value="AIRS"/>
    <property type="match status" value="1"/>
</dbReference>
<dbReference type="InterPro" id="IPR010918">
    <property type="entry name" value="PurM-like_C_dom"/>
</dbReference>
<dbReference type="InterPro" id="IPR036676">
    <property type="entry name" value="PurM-like_C_sf"/>
</dbReference>
<dbReference type="InterPro" id="IPR016188">
    <property type="entry name" value="PurM-like_N"/>
</dbReference>
<dbReference type="InterPro" id="IPR036921">
    <property type="entry name" value="PurM-like_N_sf"/>
</dbReference>
<dbReference type="InterPro" id="IPR004733">
    <property type="entry name" value="PurM_cligase"/>
</dbReference>
<dbReference type="NCBIfam" id="TIGR00878">
    <property type="entry name" value="purM"/>
    <property type="match status" value="1"/>
</dbReference>
<dbReference type="PANTHER" id="PTHR10520:SF12">
    <property type="entry name" value="TRIFUNCTIONAL PURINE BIOSYNTHETIC PROTEIN ADENOSINE-3"/>
    <property type="match status" value="1"/>
</dbReference>
<dbReference type="PANTHER" id="PTHR10520">
    <property type="entry name" value="TRIFUNCTIONAL PURINE BIOSYNTHETIC PROTEIN ADENOSINE-3-RELATED"/>
    <property type="match status" value="1"/>
</dbReference>
<dbReference type="Pfam" id="PF00586">
    <property type="entry name" value="AIRS"/>
    <property type="match status" value="1"/>
</dbReference>
<dbReference type="Pfam" id="PF02769">
    <property type="entry name" value="AIRS_C"/>
    <property type="match status" value="1"/>
</dbReference>
<dbReference type="SUPFAM" id="SSF56042">
    <property type="entry name" value="PurM C-terminal domain-like"/>
    <property type="match status" value="1"/>
</dbReference>
<dbReference type="SUPFAM" id="SSF55326">
    <property type="entry name" value="PurM N-terminal domain-like"/>
    <property type="match status" value="1"/>
</dbReference>